<name>NRDI_SALSV</name>
<organism>
    <name type="scientific">Salmonella schwarzengrund (strain CVM19633)</name>
    <dbReference type="NCBI Taxonomy" id="439843"/>
    <lineage>
        <taxon>Bacteria</taxon>
        <taxon>Pseudomonadati</taxon>
        <taxon>Pseudomonadota</taxon>
        <taxon>Gammaproteobacteria</taxon>
        <taxon>Enterobacterales</taxon>
        <taxon>Enterobacteriaceae</taxon>
        <taxon>Salmonella</taxon>
    </lineage>
</organism>
<protein>
    <recommendedName>
        <fullName evidence="1">Protein NrdI</fullName>
    </recommendedName>
</protein>
<evidence type="ECO:0000255" key="1">
    <source>
        <dbReference type="HAMAP-Rule" id="MF_00128"/>
    </source>
</evidence>
<dbReference type="EMBL" id="CP001127">
    <property type="protein sequence ID" value="ACF92781.1"/>
    <property type="molecule type" value="Genomic_DNA"/>
</dbReference>
<dbReference type="RefSeq" id="WP_001275402.1">
    <property type="nucleotide sequence ID" value="NC_011094.1"/>
</dbReference>
<dbReference type="SMR" id="B4TSY7"/>
<dbReference type="KEGG" id="sew:SeSA_A2954"/>
<dbReference type="HOGENOM" id="CLU_114845_0_0_6"/>
<dbReference type="Proteomes" id="UP000001865">
    <property type="component" value="Chromosome"/>
</dbReference>
<dbReference type="GO" id="GO:0010181">
    <property type="term" value="F:FMN binding"/>
    <property type="evidence" value="ECO:0007669"/>
    <property type="project" value="InterPro"/>
</dbReference>
<dbReference type="GO" id="GO:0036211">
    <property type="term" value="P:protein modification process"/>
    <property type="evidence" value="ECO:0007669"/>
    <property type="project" value="InterPro"/>
</dbReference>
<dbReference type="FunFam" id="3.40.50.360:FF:000005">
    <property type="entry name" value="Protein NrdI"/>
    <property type="match status" value="1"/>
</dbReference>
<dbReference type="Gene3D" id="3.40.50.360">
    <property type="match status" value="1"/>
</dbReference>
<dbReference type="HAMAP" id="MF_00128">
    <property type="entry name" value="NrdI"/>
    <property type="match status" value="1"/>
</dbReference>
<dbReference type="InterPro" id="IPR029039">
    <property type="entry name" value="Flavoprotein-like_sf"/>
</dbReference>
<dbReference type="InterPro" id="IPR020852">
    <property type="entry name" value="RNR_Ib_NrdI_bac"/>
</dbReference>
<dbReference type="InterPro" id="IPR004465">
    <property type="entry name" value="RNR_NrdI"/>
</dbReference>
<dbReference type="NCBIfam" id="TIGR00333">
    <property type="entry name" value="nrdI"/>
    <property type="match status" value="1"/>
</dbReference>
<dbReference type="PANTHER" id="PTHR37297">
    <property type="entry name" value="PROTEIN NRDI"/>
    <property type="match status" value="1"/>
</dbReference>
<dbReference type="PANTHER" id="PTHR37297:SF1">
    <property type="entry name" value="PROTEIN NRDI"/>
    <property type="match status" value="1"/>
</dbReference>
<dbReference type="Pfam" id="PF07972">
    <property type="entry name" value="Flavodoxin_NdrI"/>
    <property type="match status" value="1"/>
</dbReference>
<dbReference type="PIRSF" id="PIRSF005087">
    <property type="entry name" value="NrdI"/>
    <property type="match status" value="1"/>
</dbReference>
<dbReference type="SUPFAM" id="SSF52218">
    <property type="entry name" value="Flavoproteins"/>
    <property type="match status" value="1"/>
</dbReference>
<feature type="chain" id="PRO_1000095634" description="Protein NrdI">
    <location>
        <begin position="1"/>
        <end position="136"/>
    </location>
</feature>
<proteinExistence type="inferred from homology"/>
<sequence length="136" mass="15314">MSALVYFSSSSENTHRFMQRLGLPATRIPLNERERIQVDEPYILVVPSYGGGGMAGAVPRQVIRFLNDEHNRARIRGVIASGNRNFGDAWGCAGDVIAQKCGVPWLYRFELMGTQRDIDNVRKGVNEFWQQLSRSA</sequence>
<accession>B4TSY7</accession>
<comment type="function">
    <text evidence="1">Probably involved in ribonucleotide reductase function.</text>
</comment>
<comment type="similarity">
    <text evidence="1">Belongs to the NrdI family.</text>
</comment>
<gene>
    <name evidence="1" type="primary">nrdI</name>
    <name type="ordered locus">SeSA_A2954</name>
</gene>
<reference key="1">
    <citation type="journal article" date="2011" name="J. Bacteriol.">
        <title>Comparative genomics of 28 Salmonella enterica isolates: evidence for CRISPR-mediated adaptive sublineage evolution.</title>
        <authorList>
            <person name="Fricke W.F."/>
            <person name="Mammel M.K."/>
            <person name="McDermott P.F."/>
            <person name="Tartera C."/>
            <person name="White D.G."/>
            <person name="Leclerc J.E."/>
            <person name="Ravel J."/>
            <person name="Cebula T.A."/>
        </authorList>
    </citation>
    <scope>NUCLEOTIDE SEQUENCE [LARGE SCALE GENOMIC DNA]</scope>
    <source>
        <strain>CVM19633</strain>
    </source>
</reference>